<dbReference type="EC" id="3.1.26.4" evidence="1"/>
<dbReference type="EMBL" id="AM260522">
    <property type="protein sequence ID" value="CAJ98984.1"/>
    <property type="molecule type" value="Genomic_DNA"/>
</dbReference>
<dbReference type="RefSeq" id="WP_011577106.1">
    <property type="nucleotide sequence ID" value="NC_008229.1"/>
</dbReference>
<dbReference type="SMR" id="Q17ZE2"/>
<dbReference type="STRING" id="382638.Hac_0132"/>
<dbReference type="GeneID" id="31757661"/>
<dbReference type="KEGG" id="hac:Hac_0132"/>
<dbReference type="eggNOG" id="COG0164">
    <property type="taxonomic scope" value="Bacteria"/>
</dbReference>
<dbReference type="HOGENOM" id="CLU_036532_3_1_7"/>
<dbReference type="OrthoDB" id="9803420at2"/>
<dbReference type="BioCyc" id="HACI382638:HAC_RS00560-MONOMER"/>
<dbReference type="Proteomes" id="UP000000775">
    <property type="component" value="Chromosome"/>
</dbReference>
<dbReference type="GO" id="GO:0005737">
    <property type="term" value="C:cytoplasm"/>
    <property type="evidence" value="ECO:0007669"/>
    <property type="project" value="UniProtKB-SubCell"/>
</dbReference>
<dbReference type="GO" id="GO:0032299">
    <property type="term" value="C:ribonuclease H2 complex"/>
    <property type="evidence" value="ECO:0007669"/>
    <property type="project" value="TreeGrafter"/>
</dbReference>
<dbReference type="GO" id="GO:0030145">
    <property type="term" value="F:manganese ion binding"/>
    <property type="evidence" value="ECO:0007669"/>
    <property type="project" value="UniProtKB-UniRule"/>
</dbReference>
<dbReference type="GO" id="GO:0003723">
    <property type="term" value="F:RNA binding"/>
    <property type="evidence" value="ECO:0007669"/>
    <property type="project" value="InterPro"/>
</dbReference>
<dbReference type="GO" id="GO:0004523">
    <property type="term" value="F:RNA-DNA hybrid ribonuclease activity"/>
    <property type="evidence" value="ECO:0007669"/>
    <property type="project" value="UniProtKB-UniRule"/>
</dbReference>
<dbReference type="GO" id="GO:0043137">
    <property type="term" value="P:DNA replication, removal of RNA primer"/>
    <property type="evidence" value="ECO:0007669"/>
    <property type="project" value="TreeGrafter"/>
</dbReference>
<dbReference type="GO" id="GO:0006298">
    <property type="term" value="P:mismatch repair"/>
    <property type="evidence" value="ECO:0007669"/>
    <property type="project" value="TreeGrafter"/>
</dbReference>
<dbReference type="CDD" id="cd07182">
    <property type="entry name" value="RNase_HII_bacteria_HII_like"/>
    <property type="match status" value="1"/>
</dbReference>
<dbReference type="Gene3D" id="3.30.420.10">
    <property type="entry name" value="Ribonuclease H-like superfamily/Ribonuclease H"/>
    <property type="match status" value="1"/>
</dbReference>
<dbReference type="HAMAP" id="MF_00052_B">
    <property type="entry name" value="RNase_HII_B"/>
    <property type="match status" value="1"/>
</dbReference>
<dbReference type="InterPro" id="IPR022898">
    <property type="entry name" value="RNase_HII"/>
</dbReference>
<dbReference type="InterPro" id="IPR001352">
    <property type="entry name" value="RNase_HII/HIII"/>
</dbReference>
<dbReference type="InterPro" id="IPR024567">
    <property type="entry name" value="RNase_HII/HIII_dom"/>
</dbReference>
<dbReference type="InterPro" id="IPR012337">
    <property type="entry name" value="RNaseH-like_sf"/>
</dbReference>
<dbReference type="InterPro" id="IPR036397">
    <property type="entry name" value="RNaseH_sf"/>
</dbReference>
<dbReference type="NCBIfam" id="NF000595">
    <property type="entry name" value="PRK00015.1-3"/>
    <property type="match status" value="1"/>
</dbReference>
<dbReference type="NCBIfam" id="NF011119">
    <property type="entry name" value="PRK14550.1"/>
    <property type="match status" value="1"/>
</dbReference>
<dbReference type="PANTHER" id="PTHR10954">
    <property type="entry name" value="RIBONUCLEASE H2 SUBUNIT A"/>
    <property type="match status" value="1"/>
</dbReference>
<dbReference type="PANTHER" id="PTHR10954:SF18">
    <property type="entry name" value="RIBONUCLEASE HII"/>
    <property type="match status" value="1"/>
</dbReference>
<dbReference type="Pfam" id="PF01351">
    <property type="entry name" value="RNase_HII"/>
    <property type="match status" value="1"/>
</dbReference>
<dbReference type="SUPFAM" id="SSF53098">
    <property type="entry name" value="Ribonuclease H-like"/>
    <property type="match status" value="1"/>
</dbReference>
<dbReference type="PROSITE" id="PS51975">
    <property type="entry name" value="RNASE_H_2"/>
    <property type="match status" value="1"/>
</dbReference>
<protein>
    <recommendedName>
        <fullName evidence="1">Ribonuclease HII</fullName>
        <shortName evidence="1">RNase HII</shortName>
        <ecNumber evidence="1">3.1.26.4</ecNumber>
    </recommendedName>
</protein>
<proteinExistence type="inferred from homology"/>
<reference key="1">
    <citation type="journal article" date="2006" name="PLoS Genet.">
        <title>Who ate whom? Adaptive Helicobacter genomic changes that accompanied a host jump from early humans to large felines.</title>
        <authorList>
            <person name="Eppinger M."/>
            <person name="Baar C."/>
            <person name="Linz B."/>
            <person name="Raddatz G."/>
            <person name="Lanz C."/>
            <person name="Keller H."/>
            <person name="Morelli G."/>
            <person name="Gressmann H."/>
            <person name="Achtman M."/>
            <person name="Schuster S.C."/>
        </authorList>
    </citation>
    <scope>NUCLEOTIDE SEQUENCE [LARGE SCALE GENOMIC DNA]</scope>
    <source>
        <strain>Sheeba</strain>
    </source>
</reference>
<organism>
    <name type="scientific">Helicobacter acinonychis (strain Sheeba)</name>
    <dbReference type="NCBI Taxonomy" id="382638"/>
    <lineage>
        <taxon>Bacteria</taxon>
        <taxon>Pseudomonadati</taxon>
        <taxon>Campylobacterota</taxon>
        <taxon>Epsilonproteobacteria</taxon>
        <taxon>Campylobacterales</taxon>
        <taxon>Helicobacteraceae</taxon>
        <taxon>Helicobacter</taxon>
    </lineage>
</organism>
<keyword id="KW-0963">Cytoplasm</keyword>
<keyword id="KW-0255">Endonuclease</keyword>
<keyword id="KW-0378">Hydrolase</keyword>
<keyword id="KW-0464">Manganese</keyword>
<keyword id="KW-0479">Metal-binding</keyword>
<keyword id="KW-0540">Nuclease</keyword>
<sequence>MTLGIDEAGRGCLVGSLFVAGVVCGEKIALDFLKMGLKDSKKLSQNKRFFLEDKIKSHDEVKFCVIKKSAGEIDSLSLGVCLKLAVQEILEKLSPLAQTINIDGNTAFGLNKRYSNLKTIIKGDEKIAQIAMASVLAKTSKDREMLELHALFKEYGWDKNCGYGTKKHIEAIAKLGATPFHRHSFALKNNWFS</sequence>
<gene>
    <name evidence="1" type="primary">rnhB</name>
    <name type="ordered locus">Hac_0132</name>
</gene>
<name>RNH2_HELAH</name>
<evidence type="ECO:0000255" key="1">
    <source>
        <dbReference type="HAMAP-Rule" id="MF_00052"/>
    </source>
</evidence>
<evidence type="ECO:0000255" key="2">
    <source>
        <dbReference type="PROSITE-ProRule" id="PRU01319"/>
    </source>
</evidence>
<comment type="function">
    <text evidence="1">Endonuclease that specifically degrades the RNA of RNA-DNA hybrids.</text>
</comment>
<comment type="catalytic activity">
    <reaction evidence="1">
        <text>Endonucleolytic cleavage to 5'-phosphomonoester.</text>
        <dbReference type="EC" id="3.1.26.4"/>
    </reaction>
</comment>
<comment type="cofactor">
    <cofactor evidence="1">
        <name>Mn(2+)</name>
        <dbReference type="ChEBI" id="CHEBI:29035"/>
    </cofactor>
    <cofactor evidence="1">
        <name>Mg(2+)</name>
        <dbReference type="ChEBI" id="CHEBI:18420"/>
    </cofactor>
    <text evidence="1">Manganese or magnesium. Binds 1 divalent metal ion per monomer in the absence of substrate. May bind a second metal ion after substrate binding.</text>
</comment>
<comment type="subcellular location">
    <subcellularLocation>
        <location evidence="1">Cytoplasm</location>
    </subcellularLocation>
</comment>
<comment type="similarity">
    <text evidence="1">Belongs to the RNase HII family.</text>
</comment>
<accession>Q17ZE2</accession>
<feature type="chain" id="PRO_0000334904" description="Ribonuclease HII">
    <location>
        <begin position="1"/>
        <end position="193"/>
    </location>
</feature>
<feature type="domain" description="RNase H type-2" evidence="2">
    <location>
        <begin position="1"/>
        <end position="193"/>
    </location>
</feature>
<feature type="binding site" evidence="1">
    <location>
        <position position="6"/>
    </location>
    <ligand>
        <name>a divalent metal cation</name>
        <dbReference type="ChEBI" id="CHEBI:60240"/>
    </ligand>
</feature>
<feature type="binding site" evidence="1">
    <location>
        <position position="7"/>
    </location>
    <ligand>
        <name>a divalent metal cation</name>
        <dbReference type="ChEBI" id="CHEBI:60240"/>
    </ligand>
</feature>
<feature type="binding site" evidence="1">
    <location>
        <position position="103"/>
    </location>
    <ligand>
        <name>a divalent metal cation</name>
        <dbReference type="ChEBI" id="CHEBI:60240"/>
    </ligand>
</feature>